<organism>
    <name type="scientific">Clavispora lusitaniae (strain ATCC 42720)</name>
    <name type="common">Yeast</name>
    <name type="synonym">Candida lusitaniae</name>
    <dbReference type="NCBI Taxonomy" id="306902"/>
    <lineage>
        <taxon>Eukaryota</taxon>
        <taxon>Fungi</taxon>
        <taxon>Dikarya</taxon>
        <taxon>Ascomycota</taxon>
        <taxon>Saccharomycotina</taxon>
        <taxon>Pichiomycetes</taxon>
        <taxon>Metschnikowiaceae</taxon>
        <taxon>Clavispora</taxon>
    </lineage>
</organism>
<gene>
    <name type="primary">RTC1</name>
    <name type="ORF">CLUG_03481</name>
</gene>
<name>RTC1_CLAL4</name>
<comment type="function">
    <text evidence="1">May be involved in a process influencing telomere capping.</text>
</comment>
<comment type="subcellular location">
    <subcellularLocation>
        <location evidence="1">Vacuole</location>
    </subcellularLocation>
</comment>
<comment type="similarity">
    <text evidence="4">Belongs to the WD repeat RTC1 family.</text>
</comment>
<sequence length="1158" mass="127059">MVSSLARYAFNIYGDTRPRERPRRLEYPCERELTCLSQLQRPGQPPVVILGGKNCLRMLALNADNTAVVADSSIVDSARTPQKLFSVNTLKCTSDLVACGLANGTVQVYQVTSGGKNRLAYKLQDHKRVVNSLDFVDDSVLVSGSQDGTVKVWDLRTFSPRPVMQLAASHHSDPVRSCQASAHCRVRGKTTVLSVHDSGALCKFDLRATAGVGAGVGAGAGAGALLPERKWTFHSGPALSLHIHPDAEYVLTGGRDRKICVWHYGEAGSHSVAPLSIVNTYGPVMKVRWCTVAAQDPVEPTLDLPDAPDPSCLYNYDFACSYLNDDATISVYNLRRRYIPKAVVASPMRKPVQNFVWVASRTDRRLFSISKANVLVAHDLDVNDVDITRPLDNMPAVATAWRPGYANVSIVSQHKNDFELGDPVADSRDTSFDDTRDDLSHSRSTPPKERPPIVRQSTQFTVASLKSQSPVLHQRGMDSSVRDSSARAMDLSGRGLDLPPPVRPSLPRNPSQSTQGSQSSGAAHSKSLPHAPSPYVAALSVPIPLADDTVFDILAAEYHISVPDGFSLLDVCQMNARVAASVSRYRDCEIWRMLGVSLEQEFEEHQFDDPRFDGQFEDQHTDPQNASGSQHSEKDIDTKSVSSYLGNFVGSFNSNSTSTTNYGGPHRSDSATSMNKALFGSKEREGKEGKDIKHGKREKEIEQGLESPKELNPLSTRRKDSDSKANNADSSALDKPGDKSLDRSALDRSAPTSFRNKSLLQTSDGETPKDNNLSDEIHAYEPRNNLSTKVSLSTMSSQKSKAIDIKAPRRYSNNAMSASMSPEIFASSESPLKHIAKLSPSRSQTGHSWSIPSSSHDLDDENMPASVSGSLASSGYMGGPDSRSGITGTSFHSNPRSHPSFSSHRSSLTSGRSSFVTNRSGFYSSQVQPAPQLLEKVEEFSISSAEPKTSELTKAMRKKKFSYEELESSEANEKPWSLINLLEKAVIYARDQGDLVMCCTLILLFHDLFKKIFSNRILSDNACLECLALYVDTLRGKCLFTTAVNVVKEAPSSLNYKLAVYASKDVDMRYYCCWCEKLLVNETSKAKFGPNSENFGYWYCDSCSRRQSNCIYCGEPCRGLTVVVSLNCGHRGHFGCLQEWFLDEQSTGCPGGCEYVMD</sequence>
<keyword id="KW-0479">Metal-binding</keyword>
<keyword id="KW-1185">Reference proteome</keyword>
<keyword id="KW-0677">Repeat</keyword>
<keyword id="KW-0926">Vacuole</keyword>
<keyword id="KW-0853">WD repeat</keyword>
<keyword id="KW-0862">Zinc</keyword>
<keyword id="KW-0863">Zinc-finger</keyword>
<proteinExistence type="inferred from homology"/>
<dbReference type="EMBL" id="CH408079">
    <property type="protein sequence ID" value="EEQ39353.1"/>
    <property type="molecule type" value="Genomic_DNA"/>
</dbReference>
<dbReference type="RefSeq" id="XP_002616240.1">
    <property type="nucleotide sequence ID" value="XM_002616194.1"/>
</dbReference>
<dbReference type="FunCoup" id="C4Y5P7">
    <property type="interactions" value="121"/>
</dbReference>
<dbReference type="STRING" id="306902.C4Y5P7"/>
<dbReference type="GeneID" id="8496811"/>
<dbReference type="KEGG" id="clu:CLUG_03481"/>
<dbReference type="VEuPathDB" id="FungiDB:CLUG_03481"/>
<dbReference type="HOGENOM" id="CLU_008512_0_0_1"/>
<dbReference type="InParanoid" id="C4Y5P7"/>
<dbReference type="OMA" id="GRDGKCC"/>
<dbReference type="OrthoDB" id="95983at4891"/>
<dbReference type="Proteomes" id="UP000007703">
    <property type="component" value="Unassembled WGS sequence"/>
</dbReference>
<dbReference type="GO" id="GO:0005829">
    <property type="term" value="C:cytosol"/>
    <property type="evidence" value="ECO:0007669"/>
    <property type="project" value="TreeGrafter"/>
</dbReference>
<dbReference type="GO" id="GO:0061700">
    <property type="term" value="C:GATOR2 complex"/>
    <property type="evidence" value="ECO:0007669"/>
    <property type="project" value="TreeGrafter"/>
</dbReference>
<dbReference type="GO" id="GO:0005774">
    <property type="term" value="C:vacuolar membrane"/>
    <property type="evidence" value="ECO:0007669"/>
    <property type="project" value="TreeGrafter"/>
</dbReference>
<dbReference type="GO" id="GO:0008270">
    <property type="term" value="F:zinc ion binding"/>
    <property type="evidence" value="ECO:0007669"/>
    <property type="project" value="UniProtKB-KW"/>
</dbReference>
<dbReference type="GO" id="GO:0016239">
    <property type="term" value="P:positive regulation of macroautophagy"/>
    <property type="evidence" value="ECO:0007669"/>
    <property type="project" value="TreeGrafter"/>
</dbReference>
<dbReference type="GO" id="GO:1904263">
    <property type="term" value="P:positive regulation of TORC1 signaling"/>
    <property type="evidence" value="ECO:0007669"/>
    <property type="project" value="TreeGrafter"/>
</dbReference>
<dbReference type="CDD" id="cd16488">
    <property type="entry name" value="mRING-H2-C3H3C2_Mio-like"/>
    <property type="match status" value="1"/>
</dbReference>
<dbReference type="Gene3D" id="2.130.10.10">
    <property type="entry name" value="YVTN repeat-like/Quinoprotein amine dehydrogenase"/>
    <property type="match status" value="2"/>
</dbReference>
<dbReference type="InterPro" id="IPR015943">
    <property type="entry name" value="WD40/YVTN_repeat-like_dom_sf"/>
</dbReference>
<dbReference type="InterPro" id="IPR019775">
    <property type="entry name" value="WD40_repeat_CS"/>
</dbReference>
<dbReference type="InterPro" id="IPR036322">
    <property type="entry name" value="WD40_repeat_dom_sf"/>
</dbReference>
<dbReference type="InterPro" id="IPR001680">
    <property type="entry name" value="WD40_rpt"/>
</dbReference>
<dbReference type="InterPro" id="IPR037590">
    <property type="entry name" value="WDR24"/>
</dbReference>
<dbReference type="InterPro" id="IPR001841">
    <property type="entry name" value="Znf_RING"/>
</dbReference>
<dbReference type="PANTHER" id="PTHR46200">
    <property type="entry name" value="GATOR COMPLEX PROTEIN WDR24"/>
    <property type="match status" value="1"/>
</dbReference>
<dbReference type="PANTHER" id="PTHR46200:SF1">
    <property type="entry name" value="GATOR COMPLEX PROTEIN WDR24"/>
    <property type="match status" value="1"/>
</dbReference>
<dbReference type="Pfam" id="PF00400">
    <property type="entry name" value="WD40"/>
    <property type="match status" value="2"/>
</dbReference>
<dbReference type="SMART" id="SM00320">
    <property type="entry name" value="WD40"/>
    <property type="match status" value="4"/>
</dbReference>
<dbReference type="SUPFAM" id="SSF50978">
    <property type="entry name" value="WD40 repeat-like"/>
    <property type="match status" value="1"/>
</dbReference>
<dbReference type="PROSITE" id="PS00678">
    <property type="entry name" value="WD_REPEATS_1"/>
    <property type="match status" value="1"/>
</dbReference>
<dbReference type="PROSITE" id="PS50082">
    <property type="entry name" value="WD_REPEATS_2"/>
    <property type="match status" value="2"/>
</dbReference>
<dbReference type="PROSITE" id="PS50294">
    <property type="entry name" value="WD_REPEATS_REGION"/>
    <property type="match status" value="1"/>
</dbReference>
<dbReference type="PROSITE" id="PS50089">
    <property type="entry name" value="ZF_RING_2"/>
    <property type="match status" value="1"/>
</dbReference>
<feature type="chain" id="PRO_0000408782" description="Restriction of telomere capping protein 1">
    <location>
        <begin position="1"/>
        <end position="1158"/>
    </location>
</feature>
<feature type="repeat" description="WD 1">
    <location>
        <begin position="80"/>
        <end position="119"/>
    </location>
</feature>
<feature type="repeat" description="WD 2">
    <location>
        <begin position="125"/>
        <end position="163"/>
    </location>
</feature>
<feature type="repeat" description="WD 3">
    <location>
        <begin position="170"/>
        <end position="214"/>
    </location>
</feature>
<feature type="repeat" description="WD 4">
    <location>
        <begin position="233"/>
        <end position="272"/>
    </location>
</feature>
<feature type="repeat" description="WD 5">
    <location>
        <begin position="293"/>
        <end position="342"/>
    </location>
</feature>
<feature type="zinc finger region" description="RING-type; degenerate" evidence="2">
    <location>
        <begin position="1110"/>
        <end position="1153"/>
    </location>
</feature>
<feature type="region of interest" description="Disordered" evidence="3">
    <location>
        <begin position="421"/>
        <end position="529"/>
    </location>
</feature>
<feature type="region of interest" description="Disordered" evidence="3">
    <location>
        <begin position="610"/>
        <end position="637"/>
    </location>
</feature>
<feature type="region of interest" description="Disordered" evidence="3">
    <location>
        <begin position="678"/>
        <end position="808"/>
    </location>
</feature>
<feature type="region of interest" description="Disordered" evidence="3">
    <location>
        <begin position="837"/>
        <end position="909"/>
    </location>
</feature>
<feature type="compositionally biased region" description="Basic and acidic residues" evidence="3">
    <location>
        <begin position="425"/>
        <end position="452"/>
    </location>
</feature>
<feature type="compositionally biased region" description="Polar residues" evidence="3">
    <location>
        <begin position="455"/>
        <end position="471"/>
    </location>
</feature>
<feature type="compositionally biased region" description="Low complexity" evidence="3">
    <location>
        <begin position="505"/>
        <end position="526"/>
    </location>
</feature>
<feature type="compositionally biased region" description="Basic and acidic residues" evidence="3">
    <location>
        <begin position="610"/>
        <end position="621"/>
    </location>
</feature>
<feature type="compositionally biased region" description="Basic and acidic residues" evidence="3">
    <location>
        <begin position="681"/>
        <end position="702"/>
    </location>
</feature>
<feature type="compositionally biased region" description="Basic and acidic residues" evidence="3">
    <location>
        <begin position="735"/>
        <end position="746"/>
    </location>
</feature>
<feature type="compositionally biased region" description="Polar residues" evidence="3">
    <location>
        <begin position="750"/>
        <end position="765"/>
    </location>
</feature>
<feature type="compositionally biased region" description="Polar residues" evidence="3">
    <location>
        <begin position="784"/>
        <end position="800"/>
    </location>
</feature>
<feature type="compositionally biased region" description="Polar residues" evidence="3">
    <location>
        <begin position="840"/>
        <end position="855"/>
    </location>
</feature>
<feature type="compositionally biased region" description="Low complexity" evidence="3">
    <location>
        <begin position="890"/>
        <end position="909"/>
    </location>
</feature>
<reference key="1">
    <citation type="journal article" date="2009" name="Nature">
        <title>Evolution of pathogenicity and sexual reproduction in eight Candida genomes.</title>
        <authorList>
            <person name="Butler G."/>
            <person name="Rasmussen M.D."/>
            <person name="Lin M.F."/>
            <person name="Santos M.A.S."/>
            <person name="Sakthikumar S."/>
            <person name="Munro C.A."/>
            <person name="Rheinbay E."/>
            <person name="Grabherr M."/>
            <person name="Forche A."/>
            <person name="Reedy J.L."/>
            <person name="Agrafioti I."/>
            <person name="Arnaud M.B."/>
            <person name="Bates S."/>
            <person name="Brown A.J.P."/>
            <person name="Brunke S."/>
            <person name="Costanzo M.C."/>
            <person name="Fitzpatrick D.A."/>
            <person name="de Groot P.W.J."/>
            <person name="Harris D."/>
            <person name="Hoyer L.L."/>
            <person name="Hube B."/>
            <person name="Klis F.M."/>
            <person name="Kodira C."/>
            <person name="Lennard N."/>
            <person name="Logue M.E."/>
            <person name="Martin R."/>
            <person name="Neiman A.M."/>
            <person name="Nikolaou E."/>
            <person name="Quail M.A."/>
            <person name="Quinn J."/>
            <person name="Santos M.C."/>
            <person name="Schmitzberger F.F."/>
            <person name="Sherlock G."/>
            <person name="Shah P."/>
            <person name="Silverstein K.A.T."/>
            <person name="Skrzypek M.S."/>
            <person name="Soll D."/>
            <person name="Staggs R."/>
            <person name="Stansfield I."/>
            <person name="Stumpf M.P.H."/>
            <person name="Sudbery P.E."/>
            <person name="Srikantha T."/>
            <person name="Zeng Q."/>
            <person name="Berman J."/>
            <person name="Berriman M."/>
            <person name="Heitman J."/>
            <person name="Gow N.A.R."/>
            <person name="Lorenz M.C."/>
            <person name="Birren B.W."/>
            <person name="Kellis M."/>
            <person name="Cuomo C.A."/>
        </authorList>
    </citation>
    <scope>NUCLEOTIDE SEQUENCE [LARGE SCALE GENOMIC DNA]</scope>
    <source>
        <strain>ATCC 42720</strain>
    </source>
</reference>
<protein>
    <recommendedName>
        <fullName>Restriction of telomere capping protein 1</fullName>
    </recommendedName>
</protein>
<accession>C4Y5P7</accession>
<evidence type="ECO:0000250" key="1"/>
<evidence type="ECO:0000255" key="2">
    <source>
        <dbReference type="PROSITE-ProRule" id="PRU00175"/>
    </source>
</evidence>
<evidence type="ECO:0000256" key="3">
    <source>
        <dbReference type="SAM" id="MobiDB-lite"/>
    </source>
</evidence>
<evidence type="ECO:0000305" key="4"/>